<proteinExistence type="evidence at protein level"/>
<feature type="chain" id="PRO_0000186723" description="Calcium homeostasis modulator protein 1">
    <location>
        <begin position="1"/>
        <end position="346"/>
    </location>
</feature>
<feature type="topological domain" description="Cytoplasmic" evidence="25">
    <location>
        <begin position="1"/>
        <end position="21"/>
    </location>
</feature>
<feature type="transmembrane region" description="Helical; Name=S1" evidence="2 23 27">
    <location>
        <begin position="22"/>
        <end position="37"/>
    </location>
</feature>
<feature type="topological domain" description="Extracellular" evidence="25">
    <location>
        <begin position="38"/>
        <end position="49"/>
    </location>
</feature>
<feature type="transmembrane region" description="Helical; Name=S2" evidence="2 23 27">
    <location>
        <begin position="50"/>
        <end position="72"/>
    </location>
</feature>
<feature type="topological domain" description="Cytoplasmic" evidence="25">
    <location>
        <begin position="73"/>
        <end position="99"/>
    </location>
</feature>
<feature type="transmembrane region" description="Helical; Name=S3" evidence="2 23 27">
    <location>
        <begin position="100"/>
        <end position="125"/>
    </location>
</feature>
<feature type="topological domain" description="Extracellular" evidence="25">
    <location>
        <begin position="126"/>
        <end position="180"/>
    </location>
</feature>
<feature type="transmembrane region" description="Helical; Name=S4" evidence="2 23 27">
    <location>
        <begin position="181"/>
        <end position="206"/>
    </location>
</feature>
<feature type="topological domain" description="Cytoplasmic" evidence="25">
    <location>
        <begin position="207"/>
        <end position="346"/>
    </location>
</feature>
<feature type="region of interest" description="Central pore" evidence="2">
    <location>
        <begin position="10"/>
        <end position="37"/>
    </location>
</feature>
<feature type="region of interest" description="Phospholipid-binding" evidence="23">
    <location>
        <begin position="63"/>
        <end position="70"/>
    </location>
</feature>
<feature type="region of interest" description="Phospholipid-binding" evidence="23">
    <location>
        <begin position="105"/>
        <end position="117"/>
    </location>
</feature>
<feature type="region of interest" description="Phospholipid-binding" evidence="23">
    <location>
        <begin position="192"/>
        <end position="202"/>
    </location>
</feature>
<feature type="region of interest" description="Disordered" evidence="3">
    <location>
        <begin position="313"/>
        <end position="346"/>
    </location>
</feature>
<feature type="site" description="Not glycosylated">
    <location>
        <position position="74"/>
    </location>
</feature>
<feature type="lipid moiety-binding region" description="S-palmitoyl cysteine" evidence="1">
    <location>
        <position position="101"/>
    </location>
</feature>
<feature type="lipid moiety-binding region" description="S-palmitoyl cysteine" evidence="1">
    <location>
        <position position="208"/>
    </location>
</feature>
<feature type="glycosylation site" description="N-linked (GlcNAc...) asparagine" evidence="5">
    <location>
        <position position="140"/>
    </location>
</feature>
<feature type="disulfide bond" evidence="23 27">
    <location>
        <begin position="42"/>
        <end position="127"/>
    </location>
</feature>
<feature type="disulfide bond" evidence="23 27">
    <location>
        <begin position="44"/>
        <end position="161"/>
    </location>
</feature>
<feature type="sequence variant" id="VAR_023095" description="In dbSNP:rs2986017." evidence="4 5 6 7 8 9 10 11 13 14 15 16">
    <original>L</original>
    <variation>P</variation>
    <location>
        <position position="86"/>
    </location>
</feature>
<feature type="mutagenesis site" description="Decreases channel conductance. Decreases the inhibition of channel activity by ruthenium red." evidence="23">
    <original>Q</original>
    <variation>R</variation>
    <location>
        <position position="10"/>
    </location>
</feature>
<feature type="mutagenesis site" description="Decreases channel conductance. Decreases the inhibition of channel activity by ruthenium red." evidence="23">
    <original>Q</original>
    <variation>R</variation>
    <location>
        <position position="13"/>
    </location>
</feature>
<feature type="mutagenesis site" description="Markedly decreases channel conductance and confers resistance to inhibition by ruthenium red." evidence="23">
    <original>Q</original>
    <variation>R</variation>
    <location>
        <position position="16"/>
    </location>
</feature>
<feature type="mutagenesis site" description="Decreases channel expression at the plasma membrane." evidence="23">
    <original>L</original>
    <variation>W</variation>
    <location>
        <position position="67"/>
    </location>
</feature>
<feature type="mutagenesis site" description="Significant inhibition on the control of cytosolic Ca(2+) levels. Does not affect ion channel activity." evidence="5 18">
    <original>N</original>
    <variation>G</variation>
    <location>
        <position position="72"/>
    </location>
</feature>
<feature type="mutagenesis site" description="Has no effect on glycosylation." evidence="5">
    <original>N</original>
    <variation>A</variation>
    <location>
        <position position="74"/>
    </location>
</feature>
<feature type="mutagenesis site" description="Results in approximately five-fold increase in channel current density. Does not affect channel expression at the plasma membrane." evidence="23">
    <original>I</original>
    <variation>W</variation>
    <location>
        <position position="109"/>
    </location>
</feature>
<feature type="mutagenesis site" description="Decreases channel expression at the plasma membrane. Does not affect channel conductance." evidence="23">
    <original>V</original>
    <variation>W</variation>
    <location>
        <position position="112"/>
    </location>
</feature>
<feature type="mutagenesis site" description="Impairs the ability to activate the ERK1 and ERK2 cascade." evidence="20">
    <original>W</original>
    <variation>A</variation>
    <location>
        <position position="114"/>
    </location>
</feature>
<feature type="mutagenesis site" description="Decreases channel expression at the plasma membrane. Does not affect channel conductance." evidence="23">
    <original>A</original>
    <variation>W</variation>
    <location>
        <position position="116"/>
    </location>
</feature>
<feature type="mutagenesis site" description="Impaired ion channel activity in response to change in extracellular Ca(2+) concentration." evidence="18">
    <original>D</original>
    <variation>C</variation>
    <location>
        <position position="121"/>
    </location>
</feature>
<feature type="mutagenesis site" description="No effect." evidence="18">
    <original>D</original>
    <variation>E</variation>
    <location>
        <position position="121"/>
    </location>
</feature>
<feature type="mutagenesis site" description="Prevents glycosylation and impairs ability to activate the ERK1 and ERK2 cascade." evidence="5 20">
    <original>N</original>
    <variation>A</variation>
    <location>
        <position position="140"/>
    </location>
</feature>
<feature type="mutagenesis site" description="No effect." evidence="18">
    <original>E</original>
    <variation>A</variation>
    <location>
        <position position="163"/>
    </location>
</feature>
<feature type="mutagenesis site" description="No effect." evidence="18">
    <original>D</original>
    <variation>R</variation>
    <location>
        <position position="166"/>
    </location>
</feature>
<feature type="mutagenesis site" description="Impairs channel expression at the plasma membrane." evidence="23">
    <original>V</original>
    <variation>W</variation>
    <location>
        <position position="192"/>
    </location>
</feature>
<feature type="mutagenesis site" description="Decreases channel expression at the plasma membrane. Does not affect channel conductance." evidence="23">
    <original>T</original>
    <variation>W</variation>
    <location>
        <position position="196"/>
    </location>
</feature>
<feature type="mutagenesis site" description="Increases channel expression at the plasma membrane. Does not affect channel conductance." evidence="23">
    <original>A</original>
    <variation>W</variation>
    <location>
        <position position="199"/>
    </location>
</feature>
<feature type="sequence conflict" description="In Ref. 2; AAH36193/AAH36208." evidence="25" ref="2">
    <original>H</original>
    <variation>N</variation>
    <location>
        <position position="264"/>
    </location>
</feature>
<feature type="helix" evidence="28">
    <location>
        <begin position="26"/>
        <end position="37"/>
    </location>
</feature>
<feature type="helix" evidence="28">
    <location>
        <begin position="48"/>
        <end position="69"/>
    </location>
</feature>
<feature type="turn" evidence="28">
    <location>
        <begin position="73"/>
        <end position="78"/>
    </location>
</feature>
<feature type="helix" evidence="28">
    <location>
        <begin position="93"/>
        <end position="104"/>
    </location>
</feature>
<feature type="turn" evidence="28">
    <location>
        <begin position="105"/>
        <end position="108"/>
    </location>
</feature>
<feature type="helix" evidence="28">
    <location>
        <begin position="109"/>
        <end position="119"/>
    </location>
</feature>
<feature type="helix" evidence="28">
    <location>
        <begin position="123"/>
        <end position="129"/>
    </location>
</feature>
<feature type="turn" evidence="28">
    <location>
        <begin position="150"/>
        <end position="152"/>
    </location>
</feature>
<feature type="helix" evidence="28">
    <location>
        <begin position="153"/>
        <end position="156"/>
    </location>
</feature>
<feature type="turn" evidence="28">
    <location>
        <begin position="157"/>
        <end position="160"/>
    </location>
</feature>
<feature type="turn" evidence="28">
    <location>
        <begin position="162"/>
        <end position="164"/>
    </location>
</feature>
<feature type="strand" evidence="28">
    <location>
        <begin position="169"/>
        <end position="171"/>
    </location>
</feature>
<feature type="helix" evidence="28">
    <location>
        <begin position="173"/>
        <end position="176"/>
    </location>
</feature>
<feature type="turn" evidence="28">
    <location>
        <begin position="177"/>
        <end position="179"/>
    </location>
</feature>
<feature type="helix" evidence="28">
    <location>
        <begin position="180"/>
        <end position="199"/>
    </location>
</feature>
<feature type="helix" evidence="28">
    <location>
        <begin position="201"/>
        <end position="203"/>
    </location>
</feature>
<feature type="helix" evidence="28">
    <location>
        <begin position="211"/>
        <end position="235"/>
    </location>
</feature>
<feature type="turn" evidence="28">
    <location>
        <begin position="236"/>
        <end position="239"/>
    </location>
</feature>
<feature type="helix" evidence="28">
    <location>
        <begin position="240"/>
        <end position="250"/>
    </location>
</feature>
<feature type="turn" evidence="28">
    <location>
        <begin position="251"/>
        <end position="255"/>
    </location>
</feature>
<gene>
    <name evidence="24 26" type="primary">CALHM1</name>
    <name type="synonym">FAM26C</name>
</gene>
<protein>
    <recommendedName>
        <fullName>Calcium homeostasis modulator protein 1</fullName>
    </recommendedName>
    <alternativeName>
        <fullName>Protein FAM26C</fullName>
    </alternativeName>
</protein>
<keyword id="KW-0002">3D-structure</keyword>
<keyword id="KW-0106">Calcium</keyword>
<keyword id="KW-0107">Calcium channel</keyword>
<keyword id="KW-0109">Calcium transport</keyword>
<keyword id="KW-1003">Cell membrane</keyword>
<keyword id="KW-1015">Disulfide bond</keyword>
<keyword id="KW-0256">Endoplasmic reticulum</keyword>
<keyword id="KW-0325">Glycoprotein</keyword>
<keyword id="KW-0407">Ion channel</keyword>
<keyword id="KW-0406">Ion transport</keyword>
<keyword id="KW-0449">Lipoprotein</keyword>
<keyword id="KW-0472">Membrane</keyword>
<keyword id="KW-0564">Palmitate</keyword>
<keyword id="KW-1185">Reference proteome</keyword>
<keyword id="KW-0716">Sensory transduction</keyword>
<keyword id="KW-0919">Taste</keyword>
<keyword id="KW-0812">Transmembrane</keyword>
<keyword id="KW-1133">Transmembrane helix</keyword>
<keyword id="KW-0813">Transport</keyword>
<evidence type="ECO:0000250" key="1">
    <source>
        <dbReference type="UniProtKB" id="D3Z291"/>
    </source>
</evidence>
<evidence type="ECO:0000250" key="2">
    <source>
        <dbReference type="UniProtKB" id="H2MCM1"/>
    </source>
</evidence>
<evidence type="ECO:0000256" key="3">
    <source>
        <dbReference type="SAM" id="MobiDB-lite"/>
    </source>
</evidence>
<evidence type="ECO:0000269" key="4">
    <source>
    </source>
</evidence>
<evidence type="ECO:0000269" key="5">
    <source>
    </source>
</evidence>
<evidence type="ECO:0000269" key="6">
    <source>
    </source>
</evidence>
<evidence type="ECO:0000269" key="7">
    <source>
    </source>
</evidence>
<evidence type="ECO:0000269" key="8">
    <source>
    </source>
</evidence>
<evidence type="ECO:0000269" key="9">
    <source>
    </source>
</evidence>
<evidence type="ECO:0000269" key="10">
    <source>
    </source>
</evidence>
<evidence type="ECO:0000269" key="11">
    <source>
    </source>
</evidence>
<evidence type="ECO:0000269" key="12">
    <source>
    </source>
</evidence>
<evidence type="ECO:0000269" key="13">
    <source>
    </source>
</evidence>
<evidence type="ECO:0000269" key="14">
    <source>
    </source>
</evidence>
<evidence type="ECO:0000269" key="15">
    <source>
    </source>
</evidence>
<evidence type="ECO:0000269" key="16">
    <source>
    </source>
</evidence>
<evidence type="ECO:0000269" key="17">
    <source>
    </source>
</evidence>
<evidence type="ECO:0000269" key="18">
    <source>
    </source>
</evidence>
<evidence type="ECO:0000269" key="19">
    <source>
    </source>
</evidence>
<evidence type="ECO:0000269" key="20">
    <source>
    </source>
</evidence>
<evidence type="ECO:0000269" key="21">
    <source>
    </source>
</evidence>
<evidence type="ECO:0000269" key="22">
    <source>
    </source>
</evidence>
<evidence type="ECO:0000269" key="23">
    <source>
    </source>
</evidence>
<evidence type="ECO:0000303" key="24">
    <source>
    </source>
</evidence>
<evidence type="ECO:0000305" key="25"/>
<evidence type="ECO:0000312" key="26">
    <source>
        <dbReference type="HGNC" id="HGNC:23494"/>
    </source>
</evidence>
<evidence type="ECO:0007744" key="27">
    <source>
        <dbReference type="PDB" id="8GMP"/>
    </source>
</evidence>
<evidence type="ECO:0007829" key="28">
    <source>
        <dbReference type="PDB" id="8GMP"/>
    </source>
</evidence>
<accession>Q8IU99</accession>
<accession>Q5W091</accession>
<comment type="function">
    <text evidence="1 5 17 18 19 20 21 22 23">Pore-forming subunit of gustatory voltage-gated ion channels required for sensory perception of sweet, bitter and umami tastes (By similarity). With CALHM3 forms a fast-activating voltage-gated ATP-release channel in type II taste bud cells, ATP acting as a neurotransmitter to activate afferent neural gustatory pathways (By similarity) (PubMed:23467090). Acts both as a voltage-gated and calcium-activated ion channel: mediates neuronal excitability in response to membrane depolarization and low extracellular Ca(2+) concentration (PubMed:22711817, PubMed:23300080). Has poor ion selectivity and forms a wide pore (around 14 Angstroms) that mediates permeation of small ions including Ca(2+), Na(+), K(+) and Cl(-), as well as larger ions such as ATP(4-) (PubMed:22711817, PubMed:23300080, PubMed:32832629, PubMed:37380652). Mediates Ca(2+) influx and downstream activation of the ERK1 and ERK2 cascade in neurons (PubMed:23345406). Triggers endoplasmic reticulum stress by reducing the Ca(2+) content of the endoplasmic reticulum (PubMed:21574960). May indirectly control amyloid precursor protein (APP) proteolysis and aggregated amyloid-beta (Abeta) peptides levels in a Ca(2+)-dependent manner (PubMed:18585350).</text>
</comment>
<comment type="catalytic activity">
    <reaction evidence="21 22">
        <text>ATP(in) = ATP(out)</text>
        <dbReference type="Rhea" id="RHEA:75687"/>
        <dbReference type="ChEBI" id="CHEBI:30616"/>
    </reaction>
</comment>
<comment type="catalytic activity">
    <reaction evidence="18 19">
        <text>Ca(2+)(in) = Ca(2+)(out)</text>
        <dbReference type="Rhea" id="RHEA:29671"/>
        <dbReference type="ChEBI" id="CHEBI:29108"/>
    </reaction>
</comment>
<comment type="catalytic activity">
    <reaction evidence="19">
        <text>Mg(2+)(in) = Mg(2+)(out)</text>
        <dbReference type="Rhea" id="RHEA:29827"/>
        <dbReference type="ChEBI" id="CHEBI:18420"/>
    </reaction>
</comment>
<comment type="catalytic activity">
    <reaction evidence="18 19">
        <text>Na(+)(in) = Na(+)(out)</text>
        <dbReference type="Rhea" id="RHEA:34963"/>
        <dbReference type="ChEBI" id="CHEBI:29101"/>
    </reaction>
</comment>
<comment type="catalytic activity">
    <reaction evidence="18 19">
        <text>K(+)(in) = K(+)(out)</text>
        <dbReference type="Rhea" id="RHEA:29463"/>
        <dbReference type="ChEBI" id="CHEBI:29103"/>
    </reaction>
</comment>
<comment type="catalytic activity">
    <reaction evidence="19">
        <text>Li(+)(in) = Li(+)(out)</text>
        <dbReference type="Rhea" id="RHEA:78551"/>
        <dbReference type="ChEBI" id="CHEBI:49713"/>
    </reaction>
</comment>
<comment type="catalytic activity">
    <reaction evidence="19">
        <text>Rb(+)(in) = Rb(+)(out)</text>
        <dbReference type="Rhea" id="RHEA:78547"/>
        <dbReference type="ChEBI" id="CHEBI:49847"/>
    </reaction>
</comment>
<comment type="catalytic activity">
    <reaction evidence="19">
        <text>Cs(+)(in) = Cs(+)(out)</text>
        <dbReference type="Rhea" id="RHEA:78555"/>
        <dbReference type="ChEBI" id="CHEBI:49547"/>
    </reaction>
</comment>
<comment type="catalytic activity">
    <reaction evidence="18">
        <text>chloride(in) = chloride(out)</text>
        <dbReference type="Rhea" id="RHEA:29823"/>
        <dbReference type="ChEBI" id="CHEBI:17996"/>
    </reaction>
</comment>
<comment type="activity regulation">
    <text evidence="18">Regulated by membrane voltage and extracellular Ca(2+). Inhibited by Gd(3+), ruthenium red, and Zn(2+) and partially inhibited by 2-aminoethoxydiphenyl borate.</text>
</comment>
<comment type="subunit">
    <text evidence="1 5 19 23">Oligomerizes to form hexamers and octamers. Does not form gap junctions (PubMed:23300080, PubMed:37380652). Associates with CALHM3 as a pore-forming subunit in a hetero-hexameric channel complex (By similarity).</text>
</comment>
<comment type="interaction">
    <interactant intactId="EBI-1790341">
        <id>Q8IU99</id>
    </interactant>
    <interactant intactId="EBI-77613">
        <id>P05067</id>
        <label>APP</label>
    </interactant>
    <organismsDiffer>false</organismsDiffer>
    <experiments>3</experiments>
</comment>
<comment type="interaction">
    <interactant intactId="EBI-1790341">
        <id>Q8IU99</id>
    </interactant>
    <interactant intactId="EBI-1790341">
        <id>Q8IU99</id>
        <label>CALHM1</label>
    </interactant>
    <organismsDiffer>false</organismsDiffer>
    <experiments>3</experiments>
</comment>
<comment type="interaction">
    <interactant intactId="EBI-1790341">
        <id>Q8IU99</id>
    </interactant>
    <interactant intactId="EBI-9087876">
        <id>P48730-2</id>
        <label>CSNK1D</label>
    </interactant>
    <organismsDiffer>false</organismsDiffer>
    <experiments>3</experiments>
</comment>
<comment type="subcellular location">
    <subcellularLocation>
        <location>Cell membrane</location>
        <topology evidence="5 18 19">Multi-pass membrane protein</topology>
    </subcellularLocation>
    <subcellularLocation>
        <location evidence="5">Endoplasmic reticulum membrane</location>
        <topology>Multi-pass membrane protein</topology>
    </subcellularLocation>
    <subcellularLocation>
        <location>Basolateral cell membrane</location>
        <topology evidence="1">Multi-pass membrane protein</topology>
    </subcellularLocation>
    <text evidence="1 5">Colocalizes with HSPA5 at the endoplasmic reticulum (PubMed:18585350). Localizes to the basolateral membrane of epithelial cells including taste cells (By similarity).</text>
</comment>
<comment type="tissue specificity">
    <text evidence="5 12">Predominantly expressed in adult brain. Detected also in retinoic acid-differentiated SH-SY5Y cells. Specifically expressed in circumvallate taste bud cells.</text>
</comment>
<comment type="domain">
    <text evidence="23">A phospholipid-binding pocket is formed between conserved regions of S3 and S4 helices of one subunit and S2 of the adjacent subunit. It may regulate channel assembly and gating.</text>
</comment>
<comment type="PTM">
    <text evidence="1">N-glycosylated. Assembly with CALHM3 is associated with N-glycan remodeling and formation of hybrid complex- and high mannose-type glycochains. This N-glycan processing regulates channel trafficking and gating kinetics.</text>
</comment>
<comment type="PTM">
    <text evidence="1">Palmitoylated by ZDHHC3, ZDHHC20 and possibly ZDHHC7. Palmitoylation regulates voltage-dependent gating of the channel by shifting it toward more depolarized potentials.</text>
</comment>
<comment type="polymorphism">
    <text evidence="5 6 7 8 9 10 11 13 14 15 16">Leu-86 causes a dysregulation of Ca(2+) homeostasis and amyloid precursor protein (APP) metabolism and has been suggested to be a risk factor for the development of Alzheimer disease (PubMed:18585350, PubMed:20061624, PubMed:20164592). However, this association with Alzheimer disease could not be confirmed in a number of studies performed in different populations (PubMed:19070563, PubMed:19191331, PubMed:19191332, PubMed:19472444, PubMed:19545933, PubMed:19655363, PubMed:21378601). According to a meta-analysis study, Leu-86 is likely not a genetic determinant of Alzheimer disease but may modulate age of onset by interacting with the effect of the APOE*4 allele of the APOE gene (PubMed:20847397).</text>
</comment>
<comment type="similarity">
    <text evidence="25">Belongs to the CALHM family.</text>
</comment>
<organism>
    <name type="scientific">Homo sapiens</name>
    <name type="common">Human</name>
    <dbReference type="NCBI Taxonomy" id="9606"/>
    <lineage>
        <taxon>Eukaryota</taxon>
        <taxon>Metazoa</taxon>
        <taxon>Chordata</taxon>
        <taxon>Craniata</taxon>
        <taxon>Vertebrata</taxon>
        <taxon>Euteleostomi</taxon>
        <taxon>Mammalia</taxon>
        <taxon>Eutheria</taxon>
        <taxon>Euarchontoglires</taxon>
        <taxon>Primates</taxon>
        <taxon>Haplorrhini</taxon>
        <taxon>Catarrhini</taxon>
        <taxon>Hominidae</taxon>
        <taxon>Homo</taxon>
    </lineage>
</organism>
<dbReference type="EMBL" id="AL139339">
    <property type="status" value="NOT_ANNOTATED_CDS"/>
    <property type="molecule type" value="Genomic_DNA"/>
</dbReference>
<dbReference type="EMBL" id="BC036193">
    <property type="protein sequence ID" value="AAH36193.1"/>
    <property type="molecule type" value="mRNA"/>
</dbReference>
<dbReference type="EMBL" id="BC036208">
    <property type="protein sequence ID" value="AAH36208.1"/>
    <property type="molecule type" value="mRNA"/>
</dbReference>
<dbReference type="CCDS" id="CCDS7550.1"/>
<dbReference type="RefSeq" id="NP_001001412.3">
    <property type="nucleotide sequence ID" value="NM_001001412.4"/>
</dbReference>
<dbReference type="PDB" id="8GMP">
    <property type="method" value="EM"/>
    <property type="resolution" value="2.80 A"/>
    <property type="chains" value="A/B/C/D/E/F/G/H=1-303"/>
</dbReference>
<dbReference type="PDB" id="8GMR">
    <property type="method" value="EM"/>
    <property type="resolution" value="3.76 A"/>
    <property type="chains" value="A/B/C/D/E/F/G/H=1-303"/>
</dbReference>
<dbReference type="PDB" id="8S8Z">
    <property type="method" value="EM"/>
    <property type="resolution" value="3.91 A"/>
    <property type="chains" value="A/B/C/D/E/F/G/H=1-303"/>
</dbReference>
<dbReference type="PDB" id="8S90">
    <property type="method" value="EM"/>
    <property type="resolution" value="4.73 A"/>
    <property type="chains" value="A/B/C/D/E/F/G/H=1-303"/>
</dbReference>
<dbReference type="PDBsum" id="8GMP"/>
<dbReference type="PDBsum" id="8GMR"/>
<dbReference type="PDBsum" id="8S8Z"/>
<dbReference type="PDBsum" id="8S90"/>
<dbReference type="EMDB" id="EMD-40229"/>
<dbReference type="EMDB" id="EMD-40231"/>
<dbReference type="EMDB" id="EMD-40232"/>
<dbReference type="EMDB" id="EMD-40233"/>
<dbReference type="SMR" id="Q8IU99"/>
<dbReference type="BioGRID" id="129066">
    <property type="interactions" value="1"/>
</dbReference>
<dbReference type="FunCoup" id="Q8IU99">
    <property type="interactions" value="446"/>
</dbReference>
<dbReference type="IntAct" id="Q8IU99">
    <property type="interactions" value="3"/>
</dbReference>
<dbReference type="STRING" id="9606.ENSP00000329926"/>
<dbReference type="TCDB" id="1.A.84.1.1">
    <property type="family name" value="the calcium homeostasis modulator ca(2+) channel (calhm-c) family"/>
</dbReference>
<dbReference type="GlyCosmos" id="Q8IU99">
    <property type="glycosylation" value="1 site, No reported glycans"/>
</dbReference>
<dbReference type="GlyGen" id="Q8IU99">
    <property type="glycosylation" value="1 site"/>
</dbReference>
<dbReference type="iPTMnet" id="Q8IU99"/>
<dbReference type="PhosphoSitePlus" id="Q8IU99"/>
<dbReference type="BioMuta" id="CALHM1"/>
<dbReference type="DMDM" id="68565595"/>
<dbReference type="PaxDb" id="9606-ENSP00000329926"/>
<dbReference type="ProteomicsDB" id="70525"/>
<dbReference type="Antibodypedia" id="3119">
    <property type="antibodies" value="156 antibodies from 29 providers"/>
</dbReference>
<dbReference type="DNASU" id="255022"/>
<dbReference type="Ensembl" id="ENST00000329905.6">
    <property type="protein sequence ID" value="ENSP00000329926.6"/>
    <property type="gene ID" value="ENSG00000185933.7"/>
</dbReference>
<dbReference type="GeneID" id="255022"/>
<dbReference type="KEGG" id="hsa:255022"/>
<dbReference type="MANE-Select" id="ENST00000329905.6">
    <property type="protein sequence ID" value="ENSP00000329926.6"/>
    <property type="RefSeq nucleotide sequence ID" value="NM_001001412.4"/>
    <property type="RefSeq protein sequence ID" value="NP_001001412.3"/>
</dbReference>
<dbReference type="UCSC" id="uc001kxe.3">
    <property type="organism name" value="human"/>
</dbReference>
<dbReference type="AGR" id="HGNC:23494"/>
<dbReference type="CTD" id="255022"/>
<dbReference type="DisGeNET" id="255022"/>
<dbReference type="GeneCards" id="CALHM1"/>
<dbReference type="HGNC" id="HGNC:23494">
    <property type="gene designation" value="CALHM1"/>
</dbReference>
<dbReference type="HPA" id="ENSG00000185933">
    <property type="expression patterns" value="Tissue enhanced (brain)"/>
</dbReference>
<dbReference type="MIM" id="612234">
    <property type="type" value="gene"/>
</dbReference>
<dbReference type="neXtProt" id="NX_Q8IU99"/>
<dbReference type="OpenTargets" id="ENSG00000185933"/>
<dbReference type="PharmGKB" id="PA162380954"/>
<dbReference type="VEuPathDB" id="HostDB:ENSG00000185933"/>
<dbReference type="eggNOG" id="ENOG502RCIV">
    <property type="taxonomic scope" value="Eukaryota"/>
</dbReference>
<dbReference type="GeneTree" id="ENSGT01030000234610"/>
<dbReference type="HOGENOM" id="CLU_069286_0_0_1"/>
<dbReference type="InParanoid" id="Q8IU99"/>
<dbReference type="OMA" id="WHRCKPP"/>
<dbReference type="OrthoDB" id="5978124at2759"/>
<dbReference type="PAN-GO" id="Q8IU99">
    <property type="GO annotations" value="2 GO annotations based on evolutionary models"/>
</dbReference>
<dbReference type="PhylomeDB" id="Q8IU99"/>
<dbReference type="TreeFam" id="TF329085"/>
<dbReference type="PathwayCommons" id="Q8IU99"/>
<dbReference type="Reactome" id="R-HSA-9717207">
    <property type="pathway name" value="Sensory perception of sweet, bitter, and umami (glutamate) taste"/>
</dbReference>
<dbReference type="Reactome" id="R-HSA-9730628">
    <property type="pathway name" value="Sensory perception of salty taste"/>
</dbReference>
<dbReference type="SignaLink" id="Q8IU99"/>
<dbReference type="BioGRID-ORCS" id="255022">
    <property type="hits" value="12 hits in 1152 CRISPR screens"/>
</dbReference>
<dbReference type="GenomeRNAi" id="255022"/>
<dbReference type="Pharos" id="Q8IU99">
    <property type="development level" value="Tbio"/>
</dbReference>
<dbReference type="PRO" id="PR:Q8IU99"/>
<dbReference type="Proteomes" id="UP000005640">
    <property type="component" value="Chromosome 10"/>
</dbReference>
<dbReference type="RNAct" id="Q8IU99">
    <property type="molecule type" value="protein"/>
</dbReference>
<dbReference type="Bgee" id="ENSG00000185933">
    <property type="expression patterns" value="Expressed in endothelial cell and 34 other cell types or tissues"/>
</dbReference>
<dbReference type="GO" id="GO:0016323">
    <property type="term" value="C:basolateral plasma membrane"/>
    <property type="evidence" value="ECO:0000250"/>
    <property type="project" value="UniProtKB"/>
</dbReference>
<dbReference type="GO" id="GO:0005789">
    <property type="term" value="C:endoplasmic reticulum membrane"/>
    <property type="evidence" value="ECO:0007669"/>
    <property type="project" value="UniProtKB-SubCell"/>
</dbReference>
<dbReference type="GO" id="GO:0005886">
    <property type="term" value="C:plasma membrane"/>
    <property type="evidence" value="ECO:0000314"/>
    <property type="project" value="UniProtKB"/>
</dbReference>
<dbReference type="GO" id="GO:0044853">
    <property type="term" value="C:plasma membrane raft"/>
    <property type="evidence" value="ECO:0007669"/>
    <property type="project" value="Ensembl"/>
</dbReference>
<dbReference type="GO" id="GO:0005227">
    <property type="term" value="F:calcium-activated cation channel activity"/>
    <property type="evidence" value="ECO:0000314"/>
    <property type="project" value="UniProtKB"/>
</dbReference>
<dbReference type="GO" id="GO:0042802">
    <property type="term" value="F:identical protein binding"/>
    <property type="evidence" value="ECO:0000353"/>
    <property type="project" value="IntAct"/>
</dbReference>
<dbReference type="GO" id="GO:0005261">
    <property type="term" value="F:monoatomic cation channel activity"/>
    <property type="evidence" value="ECO:0000318"/>
    <property type="project" value="GO_Central"/>
</dbReference>
<dbReference type="GO" id="GO:0005245">
    <property type="term" value="F:voltage-gated calcium channel activity"/>
    <property type="evidence" value="ECO:0007669"/>
    <property type="project" value="Ensembl"/>
</dbReference>
<dbReference type="GO" id="GO:0005244">
    <property type="term" value="F:voltage-gated monoatomic ion channel activity"/>
    <property type="evidence" value="ECO:0000314"/>
    <property type="project" value="UniProtKB"/>
</dbReference>
<dbReference type="GO" id="GO:1904669">
    <property type="term" value="P:ATP export"/>
    <property type="evidence" value="ECO:0000314"/>
    <property type="project" value="UniProtKB"/>
</dbReference>
<dbReference type="GO" id="GO:0015867">
    <property type="term" value="P:ATP transport"/>
    <property type="evidence" value="ECO:0000250"/>
    <property type="project" value="UniProtKB"/>
</dbReference>
<dbReference type="GO" id="GO:0006812">
    <property type="term" value="P:monoatomic cation transport"/>
    <property type="evidence" value="ECO:0000314"/>
    <property type="project" value="UniProtKB"/>
</dbReference>
<dbReference type="GO" id="GO:0051291">
    <property type="term" value="P:protein heterooligomerization"/>
    <property type="evidence" value="ECO:0007669"/>
    <property type="project" value="Ensembl"/>
</dbReference>
<dbReference type="GO" id="GO:0051260">
    <property type="term" value="P:protein homooligomerization"/>
    <property type="evidence" value="ECO:0000314"/>
    <property type="project" value="UniProtKB"/>
</dbReference>
<dbReference type="GO" id="GO:0034765">
    <property type="term" value="P:regulation of monoatomic ion transmembrane transport"/>
    <property type="evidence" value="ECO:0000314"/>
    <property type="project" value="UniProtKB"/>
</dbReference>
<dbReference type="GO" id="GO:0050913">
    <property type="term" value="P:sensory perception of bitter taste"/>
    <property type="evidence" value="ECO:0000250"/>
    <property type="project" value="UniProtKB"/>
</dbReference>
<dbReference type="GO" id="GO:0050916">
    <property type="term" value="P:sensory perception of sweet taste"/>
    <property type="evidence" value="ECO:0000250"/>
    <property type="project" value="UniProtKB"/>
</dbReference>
<dbReference type="GO" id="GO:0050917">
    <property type="term" value="P:sensory perception of umami taste"/>
    <property type="evidence" value="ECO:0000250"/>
    <property type="project" value="UniProtKB"/>
</dbReference>
<dbReference type="InterPro" id="IPR029569">
    <property type="entry name" value="CALHM"/>
</dbReference>
<dbReference type="PANTHER" id="PTHR32261">
    <property type="entry name" value="CALCIUM HOMEOSTASIS MODULATOR PROTEIN"/>
    <property type="match status" value="1"/>
</dbReference>
<dbReference type="PANTHER" id="PTHR32261:SF2">
    <property type="entry name" value="CALCIUM HOMEOSTASIS MODULATOR PROTEIN 1"/>
    <property type="match status" value="1"/>
</dbReference>
<dbReference type="Pfam" id="PF14798">
    <property type="entry name" value="Ca_hom_mod"/>
    <property type="match status" value="1"/>
</dbReference>
<reference key="1">
    <citation type="journal article" date="2004" name="Nature">
        <title>The DNA sequence and comparative analysis of human chromosome 10.</title>
        <authorList>
            <person name="Deloukas P."/>
            <person name="Earthrowl M.E."/>
            <person name="Grafham D.V."/>
            <person name="Rubenfield M."/>
            <person name="French L."/>
            <person name="Steward C.A."/>
            <person name="Sims S.K."/>
            <person name="Jones M.C."/>
            <person name="Searle S."/>
            <person name="Scott C."/>
            <person name="Howe K."/>
            <person name="Hunt S.E."/>
            <person name="Andrews T.D."/>
            <person name="Gilbert J.G.R."/>
            <person name="Swarbreck D."/>
            <person name="Ashurst J.L."/>
            <person name="Taylor A."/>
            <person name="Battles J."/>
            <person name="Bird C.P."/>
            <person name="Ainscough R."/>
            <person name="Almeida J.P."/>
            <person name="Ashwell R.I.S."/>
            <person name="Ambrose K.D."/>
            <person name="Babbage A.K."/>
            <person name="Bagguley C.L."/>
            <person name="Bailey J."/>
            <person name="Banerjee R."/>
            <person name="Bates K."/>
            <person name="Beasley H."/>
            <person name="Bray-Allen S."/>
            <person name="Brown A.J."/>
            <person name="Brown J.Y."/>
            <person name="Burford D.C."/>
            <person name="Burrill W."/>
            <person name="Burton J."/>
            <person name="Cahill P."/>
            <person name="Camire D."/>
            <person name="Carter N.P."/>
            <person name="Chapman J.C."/>
            <person name="Clark S.Y."/>
            <person name="Clarke G."/>
            <person name="Clee C.M."/>
            <person name="Clegg S."/>
            <person name="Corby N."/>
            <person name="Coulson A."/>
            <person name="Dhami P."/>
            <person name="Dutta I."/>
            <person name="Dunn M."/>
            <person name="Faulkner L."/>
            <person name="Frankish A."/>
            <person name="Frankland J.A."/>
            <person name="Garner P."/>
            <person name="Garnett J."/>
            <person name="Gribble S."/>
            <person name="Griffiths C."/>
            <person name="Grocock R."/>
            <person name="Gustafson E."/>
            <person name="Hammond S."/>
            <person name="Harley J.L."/>
            <person name="Hart E."/>
            <person name="Heath P.D."/>
            <person name="Ho T.P."/>
            <person name="Hopkins B."/>
            <person name="Horne J."/>
            <person name="Howden P.J."/>
            <person name="Huckle E."/>
            <person name="Hynds C."/>
            <person name="Johnson C."/>
            <person name="Johnson D."/>
            <person name="Kana A."/>
            <person name="Kay M."/>
            <person name="Kimberley A.M."/>
            <person name="Kershaw J.K."/>
            <person name="Kokkinaki M."/>
            <person name="Laird G.K."/>
            <person name="Lawlor S."/>
            <person name="Lee H.M."/>
            <person name="Leongamornlert D.A."/>
            <person name="Laird G."/>
            <person name="Lloyd C."/>
            <person name="Lloyd D.M."/>
            <person name="Loveland J."/>
            <person name="Lovell J."/>
            <person name="McLaren S."/>
            <person name="McLay K.E."/>
            <person name="McMurray A."/>
            <person name="Mashreghi-Mohammadi M."/>
            <person name="Matthews L."/>
            <person name="Milne S."/>
            <person name="Nickerson T."/>
            <person name="Nguyen M."/>
            <person name="Overton-Larty E."/>
            <person name="Palmer S.A."/>
            <person name="Pearce A.V."/>
            <person name="Peck A.I."/>
            <person name="Pelan S."/>
            <person name="Phillimore B."/>
            <person name="Porter K."/>
            <person name="Rice C.M."/>
            <person name="Rogosin A."/>
            <person name="Ross M.T."/>
            <person name="Sarafidou T."/>
            <person name="Sehra H.K."/>
            <person name="Shownkeen R."/>
            <person name="Skuce C.D."/>
            <person name="Smith M."/>
            <person name="Standring L."/>
            <person name="Sycamore N."/>
            <person name="Tester J."/>
            <person name="Thorpe A."/>
            <person name="Torcasso W."/>
            <person name="Tracey A."/>
            <person name="Tromans A."/>
            <person name="Tsolas J."/>
            <person name="Wall M."/>
            <person name="Walsh J."/>
            <person name="Wang H."/>
            <person name="Weinstock K."/>
            <person name="West A.P."/>
            <person name="Willey D.L."/>
            <person name="Whitehead S.L."/>
            <person name="Wilming L."/>
            <person name="Wray P.W."/>
            <person name="Young L."/>
            <person name="Chen Y."/>
            <person name="Lovering R.C."/>
            <person name="Moschonas N.K."/>
            <person name="Siebert R."/>
            <person name="Fechtel K."/>
            <person name="Bentley D."/>
            <person name="Durbin R.M."/>
            <person name="Hubbard T."/>
            <person name="Doucette-Stamm L."/>
            <person name="Beck S."/>
            <person name="Smith D.R."/>
            <person name="Rogers J."/>
        </authorList>
    </citation>
    <scope>NUCLEOTIDE SEQUENCE [LARGE SCALE GENOMIC DNA]</scope>
</reference>
<reference key="2">
    <citation type="journal article" date="2004" name="Genome Res.">
        <title>The status, quality, and expansion of the NIH full-length cDNA project: the Mammalian Gene Collection (MGC).</title>
        <authorList>
            <consortium name="The MGC Project Team"/>
        </authorList>
    </citation>
    <scope>NUCLEOTIDE SEQUENCE [LARGE SCALE MRNA]</scope>
    <scope>VARIANT PRO-86</scope>
    <source>
        <tissue>Brain</tissue>
    </source>
</reference>
<reference key="3">
    <citation type="journal article" date="2008" name="Cell">
        <title>A polymorphism in CALHM1 influences Ca2+ homeostasis, Abeta levels, and Alzheimer's disease risk.</title>
        <authorList>
            <person name="Dreses-Werringloer U."/>
            <person name="Lambert J.-C."/>
            <person name="Vingtdeux V."/>
            <person name="Zhao H."/>
            <person name="Vais H."/>
            <person name="Siebert A."/>
            <person name="Jain A."/>
            <person name="Koppel J."/>
            <person name="Rovelet-Lecrux A."/>
            <person name="Hannequin D."/>
            <person name="Pasquier F."/>
            <person name="Galimberti D."/>
            <person name="Scarpini E."/>
            <person name="Mann D."/>
            <person name="Lendon C."/>
            <person name="Campion D."/>
            <person name="Amouyel P."/>
            <person name="Davies P."/>
            <person name="Foskett J.K."/>
            <person name="Campagne F."/>
            <person name="Marambaud P."/>
        </authorList>
    </citation>
    <scope>FUNCTION</scope>
    <scope>SUBUNIT</scope>
    <scope>SUBCELLULAR LOCATION</scope>
    <scope>TISSUE SPECIFICITY</scope>
    <scope>GLYCOSYLATION AT ASN-140</scope>
    <scope>VARIANT PRO-86</scope>
    <scope>POLYMORPHISM</scope>
    <scope>MUTAGENESIS OF ASN-72; ASN-74 AND ASN-140</scope>
</reference>
<reference key="4">
    <citation type="journal article" date="2009" name="PLoS ONE">
        <title>Expression of genes encoding multi-transmembrane proteins in specific primate taste cell populations.</title>
        <authorList>
            <person name="Moyer B.D."/>
            <person name="Hevezi P."/>
            <person name="Gao N."/>
            <person name="Lu M."/>
            <person name="Kalabat D."/>
            <person name="Soto H."/>
            <person name="Echeverri F."/>
            <person name="Laita B."/>
            <person name="Yeh S.A."/>
            <person name="Zoller M."/>
            <person name="Zlotnik A."/>
        </authorList>
    </citation>
    <scope>TISSUE SPECIFICITY</scope>
</reference>
<reference key="5">
    <citation type="journal article" date="2011" name="Biochem. J.">
        <title>Calcium homoeostasis modulator 1 (CALHM1) reduces the calcium content of the endoplasmic reticulum (ER) and triggers ER stress.</title>
        <authorList>
            <person name="Gallego-Sandin S."/>
            <person name="Alonso M.T."/>
            <person name="Garcia-Sancho J."/>
        </authorList>
    </citation>
    <scope>FUNCTION</scope>
</reference>
<reference key="6">
    <citation type="journal article" date="2013" name="Nature">
        <title>CALHM1 ion channel mediates purinergic neurotransmission of sweet, bitter and umami tastes.</title>
        <authorList>
            <person name="Taruno A."/>
            <person name="Vingtdeux V."/>
            <person name="Ohmoto M."/>
            <person name="Ma Z."/>
            <person name="Dvoryanchikov G."/>
            <person name="Li A."/>
            <person name="Adrien L."/>
            <person name="Zhao H."/>
            <person name="Leung S."/>
            <person name="Abernethy M."/>
            <person name="Koppel J."/>
            <person name="Davies P."/>
            <person name="Civan M.M."/>
            <person name="Chaudhari N."/>
            <person name="Matsumoto I."/>
            <person name="Hellekant G."/>
            <person name="Tordoff M.G."/>
            <person name="Marambaud P."/>
            <person name="Foskett J.K."/>
        </authorList>
    </citation>
    <scope>FUNCTION</scope>
    <scope>TRANSPORTER ACTIVITY</scope>
</reference>
<reference key="7">
    <citation type="journal article" date="2012" name="Proc. Natl. Acad. Sci. U.S.A.">
        <title>Calcium homeostasis modulator 1 (CALHM1) is the pore-forming subunit of an ion channel that mediates extracellular Ca2+ regulation of neuronal excitability.</title>
        <authorList>
            <person name="Ma Z."/>
            <person name="Siebert A.P."/>
            <person name="Cheung K.H."/>
            <person name="Lee R.J."/>
            <person name="Johnson B."/>
            <person name="Cohen A.S."/>
            <person name="Vingtdeux V."/>
            <person name="Marambaud P."/>
            <person name="Foskett J.K."/>
        </authorList>
    </citation>
    <scope>FUNCTION</scope>
    <scope>TRANSPORTER ACTIVITY</scope>
    <scope>ACTIVITY REGULATION</scope>
    <scope>SUBCELLULAR LOCATION</scope>
    <scope>MUTAGENESIS OF ASN-72; ASP-121; GLU-163 AND ASP-166</scope>
</reference>
<reference key="8">
    <citation type="journal article" date="2013" name="J. Biol. Chem.">
        <title>Structural and functional similarities of calcium homeostasis modulator 1 (CALHM1) ion channel with connexins, pannexins, and innexins.</title>
        <authorList>
            <person name="Siebert A.P."/>
            <person name="Ma Z."/>
            <person name="Grevet J.D."/>
            <person name="Demuro A."/>
            <person name="Parker I."/>
            <person name="Foskett J.K."/>
        </authorList>
    </citation>
    <scope>FUNCTION</scope>
    <scope>TRANSPORTER ACTIVITY</scope>
    <scope>SUBUNIT</scope>
    <scope>TOPOLOGY</scope>
    <scope>SUBCELLULAR LOCATION</scope>
</reference>
<reference key="9">
    <citation type="journal article" date="2013" name="J. Cell Sci.">
        <title>CALHM1 controls Ca2+-dependent MEK/ERK/RSK/MSK signaling in neurons.</title>
        <authorList>
            <person name="Dreses-Werringloer U."/>
            <person name="Vingtdeux V."/>
            <person name="Zhao H."/>
            <person name="Chandakkar P."/>
            <person name="Davies P."/>
            <person name="Marambaud P."/>
        </authorList>
    </citation>
    <scope>FUNCTION</scope>
    <scope>MUTAGENESIS OF TRP-114 AND ASN-140</scope>
</reference>
<reference key="10">
    <citation type="journal article" date="2020" name="Sci. Adv.">
        <title>Cryo-EM structures of calcium homeostasis modulator channels in diverse oligomeric assemblies.</title>
        <authorList>
            <person name="Demura K."/>
            <person name="Kusakizako T."/>
            <person name="Shihoya W."/>
            <person name="Hiraizumi M."/>
            <person name="Nomura K."/>
            <person name="Shimada H."/>
            <person name="Yamashita K."/>
            <person name="Nishizawa T."/>
            <person name="Taruno A."/>
            <person name="Nureki O."/>
        </authorList>
    </citation>
    <scope>FUNCTION</scope>
    <scope>TRANSPORTER ACTIVITY</scope>
</reference>
<reference key="11">
    <citation type="journal article" date="2023" name="Nat. Commun.">
        <title>Structure of human CALHM1 reveals key locations for channel regulation and blockade by ruthenium red.</title>
        <authorList>
            <person name="Syrjaenen J.L."/>
            <person name="Epstein M."/>
            <person name="Gomez R."/>
            <person name="Furukawa H."/>
        </authorList>
    </citation>
    <scope>STRUCTURE BY ELECTRON MICROSCOPY (2.80 ANGSTROMS) OF 1-303</scope>
    <scope>DISULFIDE BOND</scope>
    <scope>FUNCTION</scope>
    <scope>SUBUNIT</scope>
    <scope>DOMAIN</scope>
    <scope>TOPOLOGY</scope>
    <scope>MUTAGENESIS OF GLN-10; GLN-13; GLN-16; LEU-67; ILE-109; VAL-112; ALA-116; VAL-192; THR-196 AND ALA-199</scope>
</reference>
<reference key="12">
    <citation type="journal article" date="2009" name="Ann. Hum. Genet.">
        <title>CALHM1 polymorphism is not associated with late-onset Alzheimer disease.</title>
        <authorList>
            <person name="Beecham G.W."/>
            <person name="Schnetz-Boutaud N."/>
            <person name="Haines J.L."/>
            <person name="Pericak-Vance M.A."/>
        </authorList>
    </citation>
    <scope>VARIANT PRO-86</scope>
</reference>
<reference key="13">
    <citation type="journal article" date="2008" name="Cell">
        <title>No association between CALHM1 and Alzheimer's disease risk.</title>
        <authorList>
            <person name="Bertram L."/>
            <person name="Schjeide B.M."/>
            <person name="Hooli B."/>
            <person name="Mullin K."/>
            <person name="Hiltunen M."/>
            <person name="Soininen H."/>
            <person name="Ingelsson M."/>
            <person name="Lannfelt L."/>
            <person name="Blacker D."/>
            <person name="Tanzi R.E."/>
        </authorList>
    </citation>
    <scope>VARIANT PRO-86</scope>
</reference>
<reference key="14">
    <citation type="journal article" date="2009" name="Hum. Mutat.">
        <title>No association between CALHM1 variation and risk of Alzheimer disease.</title>
        <authorList>
            <person name="Minster R.L."/>
            <person name="Demirci F.Y."/>
            <person name="DeKosky S.T."/>
            <person name="Kamboh M.I."/>
        </authorList>
    </citation>
    <scope>VARIANT PRO-86</scope>
</reference>
<reference key="15">
    <citation type="journal article" date="2009" name="Hum. Mutat.">
        <title>No association between CALHM1 and risk for Alzheimer dementia in a Belgian population.</title>
        <authorList>
            <person name="Sleegers K."/>
            <person name="Brouwers N."/>
            <person name="Bettens K."/>
            <person name="Engelborghs S."/>
            <person name="van Miegroet H."/>
            <person name="De Deyn P.P."/>
            <person name="Van Broeckhoven C."/>
        </authorList>
    </citation>
    <scope>VARIANT PRO-86</scope>
</reference>
<reference key="16">
    <citation type="journal article" date="2011" name="Neurobiol. Aging">
        <title>CALHM1 variant is not associated with Alzheimer's disease among Asians.</title>
        <authorList>
            <person name="Tan E.K."/>
            <person name="Ho P."/>
            <person name="Cheng S.Y."/>
            <person name="Yih Y."/>
            <person name="Li H.H."/>
            <person name="Fook-Chong S."/>
            <person name="Lee W.L."/>
            <person name="Zhao Y."/>
        </authorList>
    </citation>
    <scope>VARIANT PRO-86</scope>
</reference>
<reference key="17">
    <citation type="journal article" date="2010" name="Am. J. Med. Genet. B Neuropsychiatr. Genet.">
        <title>The P86L common allele of CALHM1 does not influence risk for Alzheimer disease in Japanese cohorts.</title>
        <authorList>
            <person name="Inoue K."/>
            <person name="Tanaka N."/>
            <person name="Yamashita F."/>
            <person name="Sawano Y."/>
            <person name="Asada T."/>
            <person name="Goto Y."/>
        </authorList>
    </citation>
    <scope>VARIANT PRO-86</scope>
</reference>
<reference key="18">
    <citation type="journal article" date="2010" name="J. Alzheimers Dis.">
        <title>CALHM1 P86L polymorphism is a risk factor for Alzheimer's disease in the Chinese population.</title>
        <authorList>
            <person name="Cui P.J."/>
            <person name="Zheng L."/>
            <person name="Cao L."/>
            <person name="Wang Y."/>
            <person name="Deng Y.L."/>
            <person name="Wang G."/>
            <person name="Xu W."/>
            <person name="Tang H.D."/>
            <person name="Ma J.F."/>
            <person name="Zhang T."/>
            <person name="Ding J.Q."/>
            <person name="Cheng Q."/>
            <person name="Chen S.D."/>
        </authorList>
    </citation>
    <scope>VARIANT PRO-86</scope>
</reference>
<reference key="19">
    <citation type="journal article" date="2010" name="J. Alzheimers Dis.">
        <title>CALHM1 P86L polymorphism is associated with late-onset Alzheimer's disease in a recessive model.</title>
        <authorList>
            <person name="Boada M."/>
            <person name="Antunez C."/>
            <person name="Lopez-Arrieta J."/>
            <person name="Galan J.J."/>
            <person name="Moron F.J."/>
            <person name="Hernandez I."/>
            <person name="Marin J."/>
            <person name="Martinez-Lage P."/>
            <person name="Alegret M."/>
            <person name="Carrasco J.M."/>
            <person name="Moreno C."/>
            <person name="Real L.M."/>
            <person name="Gonzalez-Perez A."/>
            <person name="Tarraga L."/>
            <person name="Ruiz A."/>
        </authorList>
    </citation>
    <scope>VARIANT PRO-86</scope>
</reference>
<reference key="20">
    <citation type="journal article" date="2010" name="J. Alzheimers Dis.">
        <title>The CALHM1 P86L polymorphism is a genetic modifier of age at onset in Alzheimer's disease: a meta-analysis study.</title>
        <authorList>
            <person name="Lambert J.C."/>
            <person name="Sleegers K."/>
            <person name="Gonzalez-Perez A."/>
            <person name="Ingelsson M."/>
            <person name="Beecham G.W."/>
            <person name="Hiltunen M."/>
            <person name="Combarros O."/>
            <person name="Bullido M.J."/>
            <person name="Brouwers N."/>
            <person name="Bettens K."/>
            <person name="Berr C."/>
            <person name="Pasquier F."/>
            <person name="Richard F."/>
            <person name="Dekosky S.T."/>
            <person name="Hannequin D."/>
            <person name="Haines J.L."/>
            <person name="Tognoni G."/>
            <person name="Fievet N."/>
            <person name="Dartigues J.F."/>
            <person name="Tzourio C."/>
            <person name="Engelborghs S."/>
            <person name="Arosio B."/>
            <person name="Coto E."/>
            <person name="De Deyn P."/>
            <person name="Del Zompo M."/>
            <person name="Mateo I."/>
            <person name="Boada M."/>
            <person name="Antunez C."/>
            <person name="Lopez-Arrieta J."/>
            <person name="Epelbaum J."/>
            <person name="Schjeide B.M."/>
            <person name="Frank-Garcia A."/>
            <person name="Giedraitis V."/>
            <person name="Helisalmi S."/>
            <person name="Porcellini E."/>
            <person name="Pilotto A."/>
            <person name="Forti P."/>
            <person name="Ferri R."/>
            <person name="Delepine M."/>
            <person name="Zelenika D."/>
            <person name="Lathrop M."/>
            <person name="Scarpini E."/>
            <person name="Siciliano G."/>
            <person name="Solfrizzi V."/>
            <person name="Sorbi S."/>
            <person name="Spalletta G."/>
            <person name="Ravaglia G."/>
            <person name="Valdivieso F."/>
            <person name="Vepsalainen S."/>
            <person name="Alvarez V."/>
            <person name="Bosco P."/>
            <person name="Mancuso M."/>
            <person name="Panza F."/>
            <person name="Nacmias B."/>
            <person name="Bossu P."/>
            <person name="Hanon O."/>
            <person name="Piccardi P."/>
            <person name="Annoni G."/>
            <person name="Mann D."/>
            <person name="Marambaud P."/>
            <person name="Seripa D."/>
            <person name="Galimberti D."/>
            <person name="Tanzi R.E."/>
            <person name="Bertram L."/>
            <person name="Lendon C."/>
            <person name="Lannfelt L."/>
            <person name="Licastro F."/>
            <person name="Campion D."/>
            <person name="Pericak-Vance M.A."/>
            <person name="Soininen H."/>
            <person name="Van Broeckhoven C."/>
            <person name="Alperovitch A."/>
            <person name="Ruiz A."/>
            <person name="Kamboh M.I."/>
            <person name="Amouyel P."/>
        </authorList>
    </citation>
    <scope>VARIANT PRO-86</scope>
</reference>
<reference key="21">
    <citation type="journal article" date="2011" name="Psychiatr. Genet.">
        <title>No association between CALHM1 polymorphism and Alzheimer's disease risk in a Hungarian population.</title>
        <authorList>
            <person name="Feher A."/>
            <person name="Juhasz A."/>
            <person name="Rimanoczy A."/>
            <person name="Pakaski M."/>
            <person name="Kalman J."/>
            <person name="Janka Z."/>
        </authorList>
    </citation>
    <scope>VARIANT PRO-86</scope>
</reference>
<sequence>MMDKFRMIFQFLQSNQESFMNGICGIMALASAQMYSAFDFNCPCLPGYNAAYSAGILLAPPLVLFLLGLVMNNNVSMLAEEWKRPLGRRAKDPAVLRYMFCSMAQRALIAPVVWVAVTLLDGKCFLCAFCTAVPVSALGNGSLAPGLPAPELARLLARVPCPEIYDGDWLLAREVAVRYLRCISQALGWSFVLLTTLLAFVVRSVRPCFTQAAFLKSKYWSHYIDIERKLFDETCTEHAKAFAKVCIQQFFEAMNHDLELGHTHGTLATAPASAAAPTTPDGAEEEREKLRGITDQGTMNRLLTSWHKCKPPLRLGQEEPPLMGNGWAGGGPRPPRKEVATYFSKV</sequence>
<name>CAHM1_HUMAN</name>